<organism>
    <name type="scientific">Vanderwaltozyma polyspora (strain ATCC 22028 / DSM 70294 / BCRC 21397 / CBS 2163 / NBRC 10782 / NRRL Y-8283 / UCD 57-17)</name>
    <name type="common">Kluyveromyces polysporus</name>
    <dbReference type="NCBI Taxonomy" id="436907"/>
    <lineage>
        <taxon>Eukaryota</taxon>
        <taxon>Fungi</taxon>
        <taxon>Dikarya</taxon>
        <taxon>Ascomycota</taxon>
        <taxon>Saccharomycotina</taxon>
        <taxon>Saccharomycetes</taxon>
        <taxon>Saccharomycetales</taxon>
        <taxon>Saccharomycetaceae</taxon>
        <taxon>Vanderwaltozyma</taxon>
    </lineage>
</organism>
<keyword id="KW-0963">Cytoplasm</keyword>
<keyword id="KW-0539">Nucleus</keyword>
<keyword id="KW-1185">Reference proteome</keyword>
<keyword id="KW-0690">Ribosome biogenesis</keyword>
<keyword id="KW-0813">Transport</keyword>
<gene>
    <name type="primary">ALB1</name>
    <name type="ORF">Kpol_1031p28</name>
</gene>
<sequence length="158" mass="17647">MPSKNSINRPKLTVNLNKKSQRLGQKRADRERKGLLQPERSSEASKSGEIKSVPLDLYFNGKESNNNSSITTKTLSKKRAKKIERNLKYAQQRKLLVDVQAKEDIDMNVESNKTKGNGKEKTPLTKMKDALWNVIEDTSSQGLTLKTGQGTTLGGPTF</sequence>
<feature type="chain" id="PRO_0000333333" description="Ribosome biogenesis protein ALB1">
    <location>
        <begin position="1"/>
        <end position="158"/>
    </location>
</feature>
<feature type="region of interest" description="Disordered" evidence="2">
    <location>
        <begin position="1"/>
        <end position="51"/>
    </location>
</feature>
<feature type="compositionally biased region" description="Polar residues" evidence="2">
    <location>
        <begin position="1"/>
        <end position="18"/>
    </location>
</feature>
<feature type="compositionally biased region" description="Basic and acidic residues" evidence="2">
    <location>
        <begin position="26"/>
        <end position="49"/>
    </location>
</feature>
<comment type="function">
    <text evidence="1">Involved in proper assembly of pre-ribosomal particles during the biogenesis of the 60S ribosomal subunit. Accompanies the pre-60S particles to the cytoplasm (By similarity).</text>
</comment>
<comment type="subunit">
    <text evidence="1">Component of the nucleoplasmic and cytoplasmic pre-60S ribosomal particles.</text>
</comment>
<comment type="subcellular location">
    <subcellularLocation>
        <location evidence="1">Cytoplasm</location>
    </subcellularLocation>
    <subcellularLocation>
        <location evidence="1">Nucleus</location>
    </subcellularLocation>
</comment>
<comment type="similarity">
    <text evidence="3">Belongs to the ALB1 family.</text>
</comment>
<reference key="1">
    <citation type="journal article" date="2007" name="Proc. Natl. Acad. Sci. U.S.A.">
        <title>Independent sorting-out of thousands of duplicated gene pairs in two yeast species descended from a whole-genome duplication.</title>
        <authorList>
            <person name="Scannell D.R."/>
            <person name="Frank A.C."/>
            <person name="Conant G.C."/>
            <person name="Byrne K.P."/>
            <person name="Woolfit M."/>
            <person name="Wolfe K.H."/>
        </authorList>
    </citation>
    <scope>NUCLEOTIDE SEQUENCE [LARGE SCALE GENOMIC DNA]</scope>
    <source>
        <strain>ATCC 22028 / DSM 70294 / BCRC 21397 / CBS 2163 / NBRC 10782 / NRRL Y-8283 / UCD 57-17</strain>
    </source>
</reference>
<evidence type="ECO:0000250" key="1"/>
<evidence type="ECO:0000256" key="2">
    <source>
        <dbReference type="SAM" id="MobiDB-lite"/>
    </source>
</evidence>
<evidence type="ECO:0000305" key="3"/>
<protein>
    <recommendedName>
        <fullName>Ribosome biogenesis protein ALB1</fullName>
    </recommendedName>
</protein>
<dbReference type="EMBL" id="DS480393">
    <property type="protein sequence ID" value="EDO18124.1"/>
    <property type="molecule type" value="Genomic_DNA"/>
</dbReference>
<dbReference type="RefSeq" id="XP_001645982.1">
    <property type="nucleotide sequence ID" value="XM_001645932.1"/>
</dbReference>
<dbReference type="SMR" id="A7THW2"/>
<dbReference type="FunCoup" id="A7THW2">
    <property type="interactions" value="264"/>
</dbReference>
<dbReference type="STRING" id="436907.A7THW2"/>
<dbReference type="GeneID" id="5546394"/>
<dbReference type="KEGG" id="vpo:Kpol_1031p28"/>
<dbReference type="eggNOG" id="ENOG502S14D">
    <property type="taxonomic scope" value="Eukaryota"/>
</dbReference>
<dbReference type="HOGENOM" id="CLU_103824_0_0_1"/>
<dbReference type="InParanoid" id="A7THW2"/>
<dbReference type="OMA" id="HHKVHSL"/>
<dbReference type="OrthoDB" id="4086742at2759"/>
<dbReference type="PhylomeDB" id="A7THW2"/>
<dbReference type="Proteomes" id="UP000000267">
    <property type="component" value="Unassembled WGS sequence"/>
</dbReference>
<dbReference type="GO" id="GO:0005737">
    <property type="term" value="C:cytoplasm"/>
    <property type="evidence" value="ECO:0007669"/>
    <property type="project" value="UniProtKB-SubCell"/>
</dbReference>
<dbReference type="GO" id="GO:0005634">
    <property type="term" value="C:nucleus"/>
    <property type="evidence" value="ECO:0007669"/>
    <property type="project" value="UniProtKB-SubCell"/>
</dbReference>
<dbReference type="GO" id="GO:0042273">
    <property type="term" value="P:ribosomal large subunit biogenesis"/>
    <property type="evidence" value="ECO:0007669"/>
    <property type="project" value="EnsemblFungi"/>
</dbReference>
<dbReference type="InterPro" id="IPR022784">
    <property type="entry name" value="Ribosome_bgen_Alb1"/>
</dbReference>
<dbReference type="Pfam" id="PF09135">
    <property type="entry name" value="Alb1"/>
    <property type="match status" value="1"/>
</dbReference>
<proteinExistence type="inferred from homology"/>
<name>ALB1_VANPO</name>
<accession>A7THW2</accession>